<feature type="chain" id="PRO_0000368423" description="ATP synthase subunit b">
    <location>
        <begin position="1"/>
        <end position="159"/>
    </location>
</feature>
<feature type="transmembrane region" description="Helical" evidence="1">
    <location>
        <begin position="2"/>
        <end position="22"/>
    </location>
</feature>
<sequence>MNISIPQIIAAILNFIILLLIVKHFWFDKITAVVDSRQSEIINKIEDTDKNQKLALELKEKNELELSNAKKQGKTIVEEYKSKAENVYEDIVKEAHEEADRIIKKSRLEAERQKKNAEEEIRAEAVELAVLVSSKTLEKTIDDLEHRRLIKDFISKVGI</sequence>
<comment type="function">
    <text evidence="1">F(1)F(0) ATP synthase produces ATP from ADP in the presence of a proton or sodium gradient. F-type ATPases consist of two structural domains, F(1) containing the extramembraneous catalytic core and F(0) containing the membrane proton channel, linked together by a central stalk and a peripheral stalk. During catalysis, ATP synthesis in the catalytic domain of F(1) is coupled via a rotary mechanism of the central stalk subunits to proton translocation.</text>
</comment>
<comment type="function">
    <text evidence="1">Component of the F(0) channel, it forms part of the peripheral stalk, linking F(1) to F(0).</text>
</comment>
<comment type="subunit">
    <text evidence="1">F-type ATPases have 2 components, F(1) - the catalytic core - and F(0) - the membrane proton channel. F(1) has five subunits: alpha(3), beta(3), gamma(1), delta(1), epsilon(1). F(0) has three main subunits: a(1), b(2) and c(10-14). The alpha and beta chains form an alternating ring which encloses part of the gamma chain. F(1) is attached to F(0) by a central stalk formed by the gamma and epsilon chains, while a peripheral stalk is formed by the delta and b chains.</text>
</comment>
<comment type="subcellular location">
    <subcellularLocation>
        <location evidence="1">Cell membrane</location>
        <topology evidence="1">Single-pass membrane protein</topology>
    </subcellularLocation>
</comment>
<comment type="similarity">
    <text evidence="1">Belongs to the ATPase B chain family.</text>
</comment>
<organism>
    <name type="scientific">Clostridium botulinum (strain Hall / ATCC 3502 / NCTC 13319 / Type A)</name>
    <dbReference type="NCBI Taxonomy" id="441771"/>
    <lineage>
        <taxon>Bacteria</taxon>
        <taxon>Bacillati</taxon>
        <taxon>Bacillota</taxon>
        <taxon>Clostridia</taxon>
        <taxon>Eubacteriales</taxon>
        <taxon>Clostridiaceae</taxon>
        <taxon>Clostridium</taxon>
    </lineage>
</organism>
<dbReference type="EMBL" id="CP000727">
    <property type="protein sequence ID" value="ABS36048.1"/>
    <property type="molecule type" value="Genomic_DNA"/>
</dbReference>
<dbReference type="EMBL" id="AM412317">
    <property type="protein sequence ID" value="CAL81707.1"/>
    <property type="molecule type" value="Genomic_DNA"/>
</dbReference>
<dbReference type="RefSeq" id="WP_003355885.1">
    <property type="nucleotide sequence ID" value="NC_009698.1"/>
</dbReference>
<dbReference type="RefSeq" id="YP_001252699.1">
    <property type="nucleotide sequence ID" value="NC_009495.1"/>
</dbReference>
<dbReference type="RefSeq" id="YP_001386111.1">
    <property type="nucleotide sequence ID" value="NC_009698.1"/>
</dbReference>
<dbReference type="SMR" id="A5HY48"/>
<dbReference type="GeneID" id="5184407"/>
<dbReference type="KEGG" id="cbh:CLC_0200"/>
<dbReference type="KEGG" id="cbo:CBO0152"/>
<dbReference type="PATRIC" id="fig|413999.7.peg.151"/>
<dbReference type="HOGENOM" id="CLU_079215_4_0_9"/>
<dbReference type="PRO" id="PR:A5HY48"/>
<dbReference type="Proteomes" id="UP000001986">
    <property type="component" value="Chromosome"/>
</dbReference>
<dbReference type="GO" id="GO:0005886">
    <property type="term" value="C:plasma membrane"/>
    <property type="evidence" value="ECO:0007669"/>
    <property type="project" value="UniProtKB-SubCell"/>
</dbReference>
<dbReference type="GO" id="GO:0045259">
    <property type="term" value="C:proton-transporting ATP synthase complex"/>
    <property type="evidence" value="ECO:0007669"/>
    <property type="project" value="UniProtKB-KW"/>
</dbReference>
<dbReference type="GO" id="GO:0046933">
    <property type="term" value="F:proton-transporting ATP synthase activity, rotational mechanism"/>
    <property type="evidence" value="ECO:0007669"/>
    <property type="project" value="UniProtKB-UniRule"/>
</dbReference>
<dbReference type="CDD" id="cd06503">
    <property type="entry name" value="ATP-synt_Fo_b"/>
    <property type="match status" value="1"/>
</dbReference>
<dbReference type="Gene3D" id="1.20.5.620">
    <property type="entry name" value="F1F0 ATP synthase subunit B, membrane domain"/>
    <property type="match status" value="1"/>
</dbReference>
<dbReference type="HAMAP" id="MF_01398">
    <property type="entry name" value="ATP_synth_b_bprime"/>
    <property type="match status" value="1"/>
</dbReference>
<dbReference type="InterPro" id="IPR028987">
    <property type="entry name" value="ATP_synth_B-like_membr_sf"/>
</dbReference>
<dbReference type="InterPro" id="IPR002146">
    <property type="entry name" value="ATP_synth_b/b'su_bac/chlpt"/>
</dbReference>
<dbReference type="InterPro" id="IPR005864">
    <property type="entry name" value="ATP_synth_F0_bsu_bac"/>
</dbReference>
<dbReference type="InterPro" id="IPR050059">
    <property type="entry name" value="ATP_synthase_B_chain"/>
</dbReference>
<dbReference type="NCBIfam" id="TIGR01144">
    <property type="entry name" value="ATP_synt_b"/>
    <property type="match status" value="1"/>
</dbReference>
<dbReference type="NCBIfam" id="NF009992">
    <property type="entry name" value="PRK13461.1"/>
    <property type="match status" value="1"/>
</dbReference>
<dbReference type="PANTHER" id="PTHR33445:SF1">
    <property type="entry name" value="ATP SYNTHASE SUBUNIT B"/>
    <property type="match status" value="1"/>
</dbReference>
<dbReference type="PANTHER" id="PTHR33445">
    <property type="entry name" value="ATP SYNTHASE SUBUNIT B', CHLOROPLASTIC"/>
    <property type="match status" value="1"/>
</dbReference>
<dbReference type="Pfam" id="PF00430">
    <property type="entry name" value="ATP-synt_B"/>
    <property type="match status" value="1"/>
</dbReference>
<dbReference type="SUPFAM" id="SSF81573">
    <property type="entry name" value="F1F0 ATP synthase subunit B, membrane domain"/>
    <property type="match status" value="1"/>
</dbReference>
<accession>A5HY48</accession>
<accession>A7G068</accession>
<name>ATPF_CLOBH</name>
<evidence type="ECO:0000255" key="1">
    <source>
        <dbReference type="HAMAP-Rule" id="MF_01398"/>
    </source>
</evidence>
<proteinExistence type="inferred from homology"/>
<reference key="1">
    <citation type="journal article" date="2007" name="Genome Res.">
        <title>Genome sequence of a proteolytic (Group I) Clostridium botulinum strain Hall A and comparative analysis of the clostridial genomes.</title>
        <authorList>
            <person name="Sebaihia M."/>
            <person name="Peck M.W."/>
            <person name="Minton N.P."/>
            <person name="Thomson N.R."/>
            <person name="Holden M.T.G."/>
            <person name="Mitchell W.J."/>
            <person name="Carter A.T."/>
            <person name="Bentley S.D."/>
            <person name="Mason D.R."/>
            <person name="Crossman L."/>
            <person name="Paul C.J."/>
            <person name="Ivens A."/>
            <person name="Wells-Bennik M.H.J."/>
            <person name="Davis I.J."/>
            <person name="Cerdeno-Tarraga A.M."/>
            <person name="Churcher C."/>
            <person name="Quail M.A."/>
            <person name="Chillingworth T."/>
            <person name="Feltwell T."/>
            <person name="Fraser A."/>
            <person name="Goodhead I."/>
            <person name="Hance Z."/>
            <person name="Jagels K."/>
            <person name="Larke N."/>
            <person name="Maddison M."/>
            <person name="Moule S."/>
            <person name="Mungall K."/>
            <person name="Norbertczak H."/>
            <person name="Rabbinowitsch E."/>
            <person name="Sanders M."/>
            <person name="Simmonds M."/>
            <person name="White B."/>
            <person name="Whithead S."/>
            <person name="Parkhill J."/>
        </authorList>
    </citation>
    <scope>NUCLEOTIDE SEQUENCE [LARGE SCALE GENOMIC DNA]</scope>
    <source>
        <strain>Hall / ATCC 3502 / NCTC 13319 / Type A</strain>
    </source>
</reference>
<reference key="2">
    <citation type="journal article" date="2007" name="PLoS ONE">
        <title>Analysis of the neurotoxin complex genes in Clostridium botulinum A1-A4 and B1 strains: BoNT/A3, /Ba4 and /B1 clusters are located within plasmids.</title>
        <authorList>
            <person name="Smith T.J."/>
            <person name="Hill K.K."/>
            <person name="Foley B.T."/>
            <person name="Detter J.C."/>
            <person name="Munk A.C."/>
            <person name="Bruce D.C."/>
            <person name="Doggett N.A."/>
            <person name="Smith L.A."/>
            <person name="Marks J.D."/>
            <person name="Xie G."/>
            <person name="Brettin T.S."/>
        </authorList>
    </citation>
    <scope>NUCLEOTIDE SEQUENCE [LARGE SCALE GENOMIC DNA]</scope>
    <source>
        <strain>Hall / ATCC 3502 / NCTC 13319 / Type A</strain>
    </source>
</reference>
<keyword id="KW-0066">ATP synthesis</keyword>
<keyword id="KW-1003">Cell membrane</keyword>
<keyword id="KW-0138">CF(0)</keyword>
<keyword id="KW-0375">Hydrogen ion transport</keyword>
<keyword id="KW-0406">Ion transport</keyword>
<keyword id="KW-0472">Membrane</keyword>
<keyword id="KW-1185">Reference proteome</keyword>
<keyword id="KW-0812">Transmembrane</keyword>
<keyword id="KW-1133">Transmembrane helix</keyword>
<keyword id="KW-0813">Transport</keyword>
<gene>
    <name evidence="1" type="primary">atpF</name>
    <name type="ordered locus">CBO0152</name>
    <name type="ordered locus">CLC_0200</name>
</gene>
<protein>
    <recommendedName>
        <fullName evidence="1">ATP synthase subunit b</fullName>
    </recommendedName>
    <alternativeName>
        <fullName evidence="1">ATP synthase F(0) sector subunit b</fullName>
    </alternativeName>
    <alternativeName>
        <fullName evidence="1">ATPase subunit I</fullName>
    </alternativeName>
    <alternativeName>
        <fullName evidence="1">F-type ATPase subunit b</fullName>
        <shortName evidence="1">F-ATPase subunit b</shortName>
    </alternativeName>
</protein>